<reference key="1">
    <citation type="journal article" date="2008" name="J. Bacteriol.">
        <title>The pangenome structure of Escherichia coli: comparative genomic analysis of E. coli commensal and pathogenic isolates.</title>
        <authorList>
            <person name="Rasko D.A."/>
            <person name="Rosovitz M.J."/>
            <person name="Myers G.S.A."/>
            <person name="Mongodin E.F."/>
            <person name="Fricke W.F."/>
            <person name="Gajer P."/>
            <person name="Crabtree J."/>
            <person name="Sebaihia M."/>
            <person name="Thomson N.R."/>
            <person name="Chaudhuri R."/>
            <person name="Henderson I.R."/>
            <person name="Sperandio V."/>
            <person name="Ravel J."/>
        </authorList>
    </citation>
    <scope>NUCLEOTIDE SEQUENCE [LARGE SCALE GENOMIC DNA]</scope>
    <source>
        <strain>HS</strain>
    </source>
</reference>
<feature type="chain" id="PRO_1000058505" description="4-hydroxy-3-methylbut-2-enyl diphosphate reductase">
    <location>
        <begin position="1"/>
        <end position="316"/>
    </location>
</feature>
<feature type="active site" description="Proton donor" evidence="1">
    <location>
        <position position="126"/>
    </location>
</feature>
<feature type="binding site" evidence="1">
    <location>
        <position position="12"/>
    </location>
    <ligand>
        <name>[4Fe-4S] cluster</name>
        <dbReference type="ChEBI" id="CHEBI:49883"/>
    </ligand>
</feature>
<feature type="binding site" evidence="1">
    <location>
        <position position="41"/>
    </location>
    <ligand>
        <name>(2E)-4-hydroxy-3-methylbut-2-enyl diphosphate</name>
        <dbReference type="ChEBI" id="CHEBI:128753"/>
    </ligand>
</feature>
<feature type="binding site" evidence="1">
    <location>
        <position position="41"/>
    </location>
    <ligand>
        <name>dimethylallyl diphosphate</name>
        <dbReference type="ChEBI" id="CHEBI:57623"/>
    </ligand>
</feature>
<feature type="binding site" evidence="1">
    <location>
        <position position="41"/>
    </location>
    <ligand>
        <name>isopentenyl diphosphate</name>
        <dbReference type="ChEBI" id="CHEBI:128769"/>
    </ligand>
</feature>
<feature type="binding site" evidence="1">
    <location>
        <position position="74"/>
    </location>
    <ligand>
        <name>(2E)-4-hydroxy-3-methylbut-2-enyl diphosphate</name>
        <dbReference type="ChEBI" id="CHEBI:128753"/>
    </ligand>
</feature>
<feature type="binding site" evidence="1">
    <location>
        <position position="74"/>
    </location>
    <ligand>
        <name>dimethylallyl diphosphate</name>
        <dbReference type="ChEBI" id="CHEBI:57623"/>
    </ligand>
</feature>
<feature type="binding site" evidence="1">
    <location>
        <position position="74"/>
    </location>
    <ligand>
        <name>isopentenyl diphosphate</name>
        <dbReference type="ChEBI" id="CHEBI:128769"/>
    </ligand>
</feature>
<feature type="binding site" evidence="1">
    <location>
        <position position="96"/>
    </location>
    <ligand>
        <name>[4Fe-4S] cluster</name>
        <dbReference type="ChEBI" id="CHEBI:49883"/>
    </ligand>
</feature>
<feature type="binding site" evidence="1">
    <location>
        <position position="124"/>
    </location>
    <ligand>
        <name>(2E)-4-hydroxy-3-methylbut-2-enyl diphosphate</name>
        <dbReference type="ChEBI" id="CHEBI:128753"/>
    </ligand>
</feature>
<feature type="binding site" evidence="1">
    <location>
        <position position="124"/>
    </location>
    <ligand>
        <name>dimethylallyl diphosphate</name>
        <dbReference type="ChEBI" id="CHEBI:57623"/>
    </ligand>
</feature>
<feature type="binding site" evidence="1">
    <location>
        <position position="124"/>
    </location>
    <ligand>
        <name>isopentenyl diphosphate</name>
        <dbReference type="ChEBI" id="CHEBI:128769"/>
    </ligand>
</feature>
<feature type="binding site" evidence="1">
    <location>
        <position position="167"/>
    </location>
    <ligand>
        <name>(2E)-4-hydroxy-3-methylbut-2-enyl diphosphate</name>
        <dbReference type="ChEBI" id="CHEBI:128753"/>
    </ligand>
</feature>
<feature type="binding site" evidence="1">
    <location>
        <position position="197"/>
    </location>
    <ligand>
        <name>[4Fe-4S] cluster</name>
        <dbReference type="ChEBI" id="CHEBI:49883"/>
    </ligand>
</feature>
<feature type="binding site" evidence="1">
    <location>
        <position position="225"/>
    </location>
    <ligand>
        <name>(2E)-4-hydroxy-3-methylbut-2-enyl diphosphate</name>
        <dbReference type="ChEBI" id="CHEBI:128753"/>
    </ligand>
</feature>
<feature type="binding site" evidence="1">
    <location>
        <position position="225"/>
    </location>
    <ligand>
        <name>dimethylallyl diphosphate</name>
        <dbReference type="ChEBI" id="CHEBI:57623"/>
    </ligand>
</feature>
<feature type="binding site" evidence="1">
    <location>
        <position position="225"/>
    </location>
    <ligand>
        <name>isopentenyl diphosphate</name>
        <dbReference type="ChEBI" id="CHEBI:128769"/>
    </ligand>
</feature>
<feature type="binding site" evidence="1">
    <location>
        <position position="226"/>
    </location>
    <ligand>
        <name>(2E)-4-hydroxy-3-methylbut-2-enyl diphosphate</name>
        <dbReference type="ChEBI" id="CHEBI:128753"/>
    </ligand>
</feature>
<feature type="binding site" evidence="1">
    <location>
        <position position="226"/>
    </location>
    <ligand>
        <name>dimethylallyl diphosphate</name>
        <dbReference type="ChEBI" id="CHEBI:57623"/>
    </ligand>
</feature>
<feature type="binding site" evidence="1">
    <location>
        <position position="226"/>
    </location>
    <ligand>
        <name>isopentenyl diphosphate</name>
        <dbReference type="ChEBI" id="CHEBI:128769"/>
    </ligand>
</feature>
<feature type="binding site" evidence="1">
    <location>
        <position position="227"/>
    </location>
    <ligand>
        <name>(2E)-4-hydroxy-3-methylbut-2-enyl diphosphate</name>
        <dbReference type="ChEBI" id="CHEBI:128753"/>
    </ligand>
</feature>
<feature type="binding site" evidence="1">
    <location>
        <position position="227"/>
    </location>
    <ligand>
        <name>dimethylallyl diphosphate</name>
        <dbReference type="ChEBI" id="CHEBI:57623"/>
    </ligand>
</feature>
<feature type="binding site" evidence="1">
    <location>
        <position position="227"/>
    </location>
    <ligand>
        <name>isopentenyl diphosphate</name>
        <dbReference type="ChEBI" id="CHEBI:128769"/>
    </ligand>
</feature>
<feature type="binding site" evidence="1">
    <location>
        <position position="269"/>
    </location>
    <ligand>
        <name>(2E)-4-hydroxy-3-methylbut-2-enyl diphosphate</name>
        <dbReference type="ChEBI" id="CHEBI:128753"/>
    </ligand>
</feature>
<feature type="binding site" evidence="1">
    <location>
        <position position="269"/>
    </location>
    <ligand>
        <name>dimethylallyl diphosphate</name>
        <dbReference type="ChEBI" id="CHEBI:57623"/>
    </ligand>
</feature>
<feature type="binding site" evidence="1">
    <location>
        <position position="269"/>
    </location>
    <ligand>
        <name>isopentenyl diphosphate</name>
        <dbReference type="ChEBI" id="CHEBI:128769"/>
    </ligand>
</feature>
<organism>
    <name type="scientific">Escherichia coli O9:H4 (strain HS)</name>
    <dbReference type="NCBI Taxonomy" id="331112"/>
    <lineage>
        <taxon>Bacteria</taxon>
        <taxon>Pseudomonadati</taxon>
        <taxon>Pseudomonadota</taxon>
        <taxon>Gammaproteobacteria</taxon>
        <taxon>Enterobacterales</taxon>
        <taxon>Enterobacteriaceae</taxon>
        <taxon>Escherichia</taxon>
    </lineage>
</organism>
<sequence length="316" mass="34705">MQILLANPRGFCAGVDRAISIVENALAIYGAPIYVRHEVVHNRYVVDSLRERGAIFIEQISEVPDGAILIFSAHGVSQAVRNEAKSRDLTVFDATCPLVTKVHMEVARASRRGEESILIGHAGHPEVEGTMGQYSNPEGGMYLVESPDDVWKLTVKNEEKLSFMTQTTLSVDDTSDVIDALRKRFPKIVGPRKDDICYATTNRQEAVRALAEQAEVVLVVGSKNSSNSNRLAELAQRMGKSAFLIDDAKDIQEEWVKEVKCVGVTAGASAPDILVQNVVARLQQLGGGEAIPLEGREENIVFEVPKELRVDIREVD</sequence>
<keyword id="KW-0004">4Fe-4S</keyword>
<keyword id="KW-0408">Iron</keyword>
<keyword id="KW-0411">Iron-sulfur</keyword>
<keyword id="KW-0414">Isoprene biosynthesis</keyword>
<keyword id="KW-0479">Metal-binding</keyword>
<keyword id="KW-0560">Oxidoreductase</keyword>
<name>ISPH_ECOHS</name>
<accession>A7ZVX7</accession>
<evidence type="ECO:0000255" key="1">
    <source>
        <dbReference type="HAMAP-Rule" id="MF_00191"/>
    </source>
</evidence>
<comment type="function">
    <text evidence="1">Catalyzes the conversion of 1-hydroxy-2-methyl-2-(E)-butenyl 4-diphosphate (HMBPP) into a mixture of isopentenyl diphosphate (IPP) and dimethylallyl diphosphate (DMAPP). Acts in the terminal step of the DOXP/MEP pathway for isoprenoid precursor biosynthesis.</text>
</comment>
<comment type="catalytic activity">
    <reaction evidence="1">
        <text>isopentenyl diphosphate + 2 oxidized [2Fe-2S]-[ferredoxin] + H2O = (2E)-4-hydroxy-3-methylbut-2-enyl diphosphate + 2 reduced [2Fe-2S]-[ferredoxin] + 2 H(+)</text>
        <dbReference type="Rhea" id="RHEA:24488"/>
        <dbReference type="Rhea" id="RHEA-COMP:10000"/>
        <dbReference type="Rhea" id="RHEA-COMP:10001"/>
        <dbReference type="ChEBI" id="CHEBI:15377"/>
        <dbReference type="ChEBI" id="CHEBI:15378"/>
        <dbReference type="ChEBI" id="CHEBI:33737"/>
        <dbReference type="ChEBI" id="CHEBI:33738"/>
        <dbReference type="ChEBI" id="CHEBI:128753"/>
        <dbReference type="ChEBI" id="CHEBI:128769"/>
        <dbReference type="EC" id="1.17.7.4"/>
    </reaction>
</comment>
<comment type="catalytic activity">
    <reaction evidence="1">
        <text>dimethylallyl diphosphate + 2 oxidized [2Fe-2S]-[ferredoxin] + H2O = (2E)-4-hydroxy-3-methylbut-2-enyl diphosphate + 2 reduced [2Fe-2S]-[ferredoxin] + 2 H(+)</text>
        <dbReference type="Rhea" id="RHEA:24825"/>
        <dbReference type="Rhea" id="RHEA-COMP:10000"/>
        <dbReference type="Rhea" id="RHEA-COMP:10001"/>
        <dbReference type="ChEBI" id="CHEBI:15377"/>
        <dbReference type="ChEBI" id="CHEBI:15378"/>
        <dbReference type="ChEBI" id="CHEBI:33737"/>
        <dbReference type="ChEBI" id="CHEBI:33738"/>
        <dbReference type="ChEBI" id="CHEBI:57623"/>
        <dbReference type="ChEBI" id="CHEBI:128753"/>
        <dbReference type="EC" id="1.17.7.4"/>
    </reaction>
</comment>
<comment type="cofactor">
    <cofactor evidence="1">
        <name>[4Fe-4S] cluster</name>
        <dbReference type="ChEBI" id="CHEBI:49883"/>
    </cofactor>
    <text evidence="1">Binds 1 [4Fe-4S] cluster per subunit.</text>
</comment>
<comment type="pathway">
    <text evidence="1">Isoprenoid biosynthesis; dimethylallyl diphosphate biosynthesis; dimethylallyl diphosphate from (2E)-4-hydroxy-3-methylbutenyl diphosphate: step 1/1.</text>
</comment>
<comment type="pathway">
    <text evidence="1">Isoprenoid biosynthesis; isopentenyl diphosphate biosynthesis via DXP pathway; isopentenyl diphosphate from 1-deoxy-D-xylulose 5-phosphate: step 6/6.</text>
</comment>
<comment type="subunit">
    <text evidence="1">Homodimer.</text>
</comment>
<comment type="similarity">
    <text evidence="1">Belongs to the IspH family.</text>
</comment>
<protein>
    <recommendedName>
        <fullName evidence="1">4-hydroxy-3-methylbut-2-enyl diphosphate reductase</fullName>
        <shortName evidence="1">HMBPP reductase</shortName>
        <ecNumber evidence="1">1.17.7.4</ecNumber>
    </recommendedName>
</protein>
<proteinExistence type="inferred from homology"/>
<dbReference type="EC" id="1.17.7.4" evidence="1"/>
<dbReference type="EMBL" id="CP000802">
    <property type="protein sequence ID" value="ABV04431.1"/>
    <property type="molecule type" value="Genomic_DNA"/>
</dbReference>
<dbReference type="RefSeq" id="WP_001166405.1">
    <property type="nucleotide sequence ID" value="NC_009800.1"/>
</dbReference>
<dbReference type="SMR" id="A7ZVX7"/>
<dbReference type="KEGG" id="ecx:EcHS_A0031"/>
<dbReference type="HOGENOM" id="CLU_027486_1_0_6"/>
<dbReference type="UniPathway" id="UPA00056">
    <property type="reaction ID" value="UER00097"/>
</dbReference>
<dbReference type="UniPathway" id="UPA00059">
    <property type="reaction ID" value="UER00105"/>
</dbReference>
<dbReference type="GO" id="GO:0051539">
    <property type="term" value="F:4 iron, 4 sulfur cluster binding"/>
    <property type="evidence" value="ECO:0007669"/>
    <property type="project" value="UniProtKB-UniRule"/>
</dbReference>
<dbReference type="GO" id="GO:0051745">
    <property type="term" value="F:4-hydroxy-3-methylbut-2-enyl diphosphate reductase activity"/>
    <property type="evidence" value="ECO:0007669"/>
    <property type="project" value="UniProtKB-UniRule"/>
</dbReference>
<dbReference type="GO" id="GO:0046872">
    <property type="term" value="F:metal ion binding"/>
    <property type="evidence" value="ECO:0007669"/>
    <property type="project" value="UniProtKB-KW"/>
</dbReference>
<dbReference type="GO" id="GO:0050992">
    <property type="term" value="P:dimethylallyl diphosphate biosynthetic process"/>
    <property type="evidence" value="ECO:0007669"/>
    <property type="project" value="UniProtKB-UniRule"/>
</dbReference>
<dbReference type="GO" id="GO:0019288">
    <property type="term" value="P:isopentenyl diphosphate biosynthetic process, methylerythritol 4-phosphate pathway"/>
    <property type="evidence" value="ECO:0007669"/>
    <property type="project" value="UniProtKB-UniRule"/>
</dbReference>
<dbReference type="GO" id="GO:0016114">
    <property type="term" value="P:terpenoid biosynthetic process"/>
    <property type="evidence" value="ECO:0007669"/>
    <property type="project" value="UniProtKB-UniRule"/>
</dbReference>
<dbReference type="CDD" id="cd13944">
    <property type="entry name" value="lytB_ispH"/>
    <property type="match status" value="1"/>
</dbReference>
<dbReference type="FunFam" id="3.40.1010.20:FF:000001">
    <property type="entry name" value="4-hydroxy-3-methylbut-2-enyl diphosphate reductase"/>
    <property type="match status" value="1"/>
</dbReference>
<dbReference type="FunFam" id="3.40.50.11270:FF:000001">
    <property type="entry name" value="4-hydroxy-3-methylbut-2-enyl diphosphate reductase"/>
    <property type="match status" value="1"/>
</dbReference>
<dbReference type="Gene3D" id="3.40.50.11270">
    <property type="match status" value="1"/>
</dbReference>
<dbReference type="Gene3D" id="3.40.1010.20">
    <property type="entry name" value="4-hydroxy-3-methylbut-2-enyl diphosphate reductase, catalytic domain"/>
    <property type="match status" value="2"/>
</dbReference>
<dbReference type="HAMAP" id="MF_00191">
    <property type="entry name" value="IspH"/>
    <property type="match status" value="1"/>
</dbReference>
<dbReference type="InterPro" id="IPR003451">
    <property type="entry name" value="LytB/IspH"/>
</dbReference>
<dbReference type="NCBIfam" id="TIGR00216">
    <property type="entry name" value="ispH_lytB"/>
    <property type="match status" value="1"/>
</dbReference>
<dbReference type="NCBIfam" id="NF002188">
    <property type="entry name" value="PRK01045.1-2"/>
    <property type="match status" value="1"/>
</dbReference>
<dbReference type="NCBIfam" id="NF002190">
    <property type="entry name" value="PRK01045.1-4"/>
    <property type="match status" value="1"/>
</dbReference>
<dbReference type="PANTHER" id="PTHR30426">
    <property type="entry name" value="4-HYDROXY-3-METHYLBUT-2-ENYL DIPHOSPHATE REDUCTASE"/>
    <property type="match status" value="1"/>
</dbReference>
<dbReference type="PANTHER" id="PTHR30426:SF0">
    <property type="entry name" value="4-HYDROXY-3-METHYLBUT-2-ENYL DIPHOSPHATE REDUCTASE"/>
    <property type="match status" value="1"/>
</dbReference>
<dbReference type="Pfam" id="PF02401">
    <property type="entry name" value="LYTB"/>
    <property type="match status" value="1"/>
</dbReference>
<gene>
    <name evidence="1" type="primary">ispH</name>
    <name type="ordered locus">EcHS_A0031</name>
</gene>